<feature type="chain" id="PRO_0000007232" description="SOS operon TUM protein">
    <location>
        <begin position="1"/>
        <end position="146"/>
    </location>
</feature>
<feature type="splice variant" id="VSP_018715" description="In isoform ORF95.5." evidence="2">
    <location>
        <begin position="1"/>
        <end position="70"/>
    </location>
</feature>
<feature type="splice variant" id="VSP_018714" description="In isoform ORF95.4." evidence="2">
    <location>
        <begin position="1"/>
        <end position="46"/>
    </location>
</feature>
<feature type="splice variant" id="VSP_018713" description="In isoform ORF95.2." evidence="2">
    <location>
        <begin position="1"/>
        <end position="9"/>
    </location>
</feature>
<feature type="splice variant" id="VSP_018989" description="In isoform ORF95.5." evidence="2">
    <original>V</original>
    <variation>M</variation>
    <location>
        <position position="71"/>
    </location>
</feature>
<feature type="mutagenesis site" description="In TUM16; loss of prophage induction." evidence="1">
    <original>E</original>
    <variation>K</variation>
    <location>
        <position position="12"/>
    </location>
</feature>
<feature type="mutagenesis site" description="In TUM17; loss of prophage induction." evidence="1">
    <original>A</original>
    <variation>V</variation>
    <location>
        <position position="34"/>
    </location>
</feature>
<feature type="mutagenesis site" description="In TUM14; loss of prophage induction." evidence="1">
    <original>E</original>
    <variation>K</variation>
    <location>
        <position position="40"/>
    </location>
</feature>
<feature type="mutagenesis site" description="In TUM2; loss of prophage induction." evidence="1">
    <original>P</original>
    <variation>S</variation>
    <location>
        <position position="104"/>
    </location>
</feature>
<organismHost>
    <name type="scientific">Escherichia coli</name>
    <dbReference type="NCBI Taxonomy" id="562"/>
</organismHost>
<reference key="1">
    <citation type="journal article" date="1996" name="Virology">
        <title>Defining the SOS operon of coliphage 186.</title>
        <authorList>
            <person name="Brumby A.M."/>
            <person name="Lamont I."/>
            <person name="Dodd I.B."/>
            <person name="Egan J.B."/>
        </authorList>
    </citation>
    <scope>NUCLEOTIDE SEQUENCE [GENOMIC DNA]</scope>
    <scope>MUTAGENESIS OF GLU-12; ALA-34; GLU-40 AND PRO-104</scope>
</reference>
<reference key="2">
    <citation type="submission" date="1998-05" db="EMBL/GenBank/DDBJ databases">
        <title>Bacteriophage 186 complete genome.</title>
        <authorList>
            <person name="Dodd I.B."/>
            <person name="Egan J.B."/>
        </authorList>
    </citation>
    <scope>SEQUENCE REVISION TO 132</scope>
</reference>
<reference key="3">
    <citation type="journal article" date="1990" name="J. Mol. Biol.">
        <title>DNA replication studies with coliphage 186. III. A single phage gene is required for phage 186 replication.</title>
        <authorList>
            <person name="Sivaprasad A.V."/>
            <person name="Jarvinen R."/>
            <person name="Puspurs A."/>
            <person name="Egan J.B."/>
        </authorList>
    </citation>
    <scope>NUCLEOTIDE SEQUENCE [GENOMIC DNA] OF 47-114</scope>
    <source>
        <strain>186CITSP</strain>
    </source>
</reference>
<keyword id="KW-0024">Alternative initiation</keyword>
<keyword id="KW-1185">Reference proteome</keyword>
<organism>
    <name type="scientific">Escherichia phage 186</name>
    <name type="common">Bacteriophage 186</name>
    <dbReference type="NCBI Taxonomy" id="29252"/>
    <lineage>
        <taxon>Viruses</taxon>
        <taxon>Duplodnaviria</taxon>
        <taxon>Heunggongvirae</taxon>
        <taxon>Uroviricota</taxon>
        <taxon>Caudoviricetes</taxon>
        <taxon>Peduoviridae</taxon>
        <taxon>Eganvirus</taxon>
    </lineage>
</organism>
<comment type="function">
    <text>The TUM protein is responsible for UV induction of the 186 prophage. The other three proteins modulate TUM activity.</text>
</comment>
<comment type="alternative products">
    <event type="alternative initiation"/>
    <isoform>
        <id>P41063-1</id>
        <name>ORF95.1</name>
        <name>TUM95.1</name>
        <sequence type="displayed"/>
    </isoform>
    <isoform>
        <id>P41063-2</id>
        <name>ORF95.2</name>
        <name>TUM95.2</name>
        <sequence type="described" ref="VSP_018713"/>
    </isoform>
    <isoform>
        <id>P41063-3</id>
        <name>ORF95.4</name>
        <name>TUM95.4</name>
        <sequence type="described" ref="VSP_018714"/>
    </isoform>
    <isoform>
        <id>P41063-4</id>
        <name>ORF95.5</name>
        <name>TUM95.5</name>
        <sequence type="described" ref="VSP_018715 VSP_018989"/>
    </isoform>
</comment>
<comment type="similarity">
    <text evidence="2">Belongs to the dinI family.</text>
</comment>
<dbReference type="EMBL" id="U32222">
    <property type="protein sequence ID" value="AAC34187.1"/>
    <property type="molecule type" value="Genomic_DNA"/>
</dbReference>
<dbReference type="EMBL" id="U32222">
    <property type="protein sequence ID" value="AAC34188.1"/>
    <property type="molecule type" value="Genomic_DNA"/>
</dbReference>
<dbReference type="EMBL" id="U32222">
    <property type="protein sequence ID" value="AAC34189.1"/>
    <property type="molecule type" value="Genomic_DNA"/>
</dbReference>
<dbReference type="EMBL" id="U32222">
    <property type="protein sequence ID" value="AAC34190.1"/>
    <property type="molecule type" value="Genomic_DNA"/>
</dbReference>
<dbReference type="PIR" id="S10633">
    <property type="entry name" value="S10633"/>
</dbReference>
<dbReference type="RefSeq" id="NP_052290.1">
    <property type="nucleotide sequence ID" value="NC_001317.1"/>
</dbReference>
<dbReference type="RefSeq" id="NP_052291.1">
    <property type="nucleotide sequence ID" value="NC_001317.1"/>
</dbReference>
<dbReference type="RefSeq" id="NP_052292.1">
    <property type="nucleotide sequence ID" value="NC_001317.1"/>
</dbReference>
<dbReference type="RefSeq" id="NP_052293.1">
    <property type="nucleotide sequence ID" value="NC_001317.1"/>
</dbReference>
<dbReference type="SMR" id="P41063"/>
<dbReference type="GeneID" id="1262465"/>
<dbReference type="KEGG" id="vg:1262465"/>
<dbReference type="OrthoDB" id="23370at10239"/>
<dbReference type="Proteomes" id="UP000000369">
    <property type="component" value="Segment"/>
</dbReference>
<dbReference type="GO" id="GO:0009432">
    <property type="term" value="P:SOS response"/>
    <property type="evidence" value="ECO:0007669"/>
    <property type="project" value="TreeGrafter"/>
</dbReference>
<dbReference type="Gene3D" id="3.30.910.10">
    <property type="entry name" value="DinI-like"/>
    <property type="match status" value="1"/>
</dbReference>
<dbReference type="InterPro" id="IPR036687">
    <property type="entry name" value="DinI-like_sf"/>
</dbReference>
<dbReference type="InterPro" id="IPR010391">
    <property type="entry name" value="DNA_damage-inducible_DinI-like"/>
</dbReference>
<dbReference type="PANTHER" id="PTHR36572:SF2">
    <property type="entry name" value="DNA DAMAGE-INDUCIBLE PROTEIN I"/>
    <property type="match status" value="1"/>
</dbReference>
<dbReference type="PANTHER" id="PTHR36572">
    <property type="entry name" value="DNA DAMAGE-INDUCIBLE PROTEIN I-RELATED"/>
    <property type="match status" value="1"/>
</dbReference>
<dbReference type="Pfam" id="PF06183">
    <property type="entry name" value="DinI"/>
    <property type="match status" value="1"/>
</dbReference>
<dbReference type="SUPFAM" id="SSF54857">
    <property type="entry name" value="DNA damage-inducible protein DinI"/>
    <property type="match status" value="1"/>
</dbReference>
<accession>P41063</accession>
<accession>O80318</accession>
<accession>O80319</accession>
<gene>
    <name type="primary">TUM</name>
    <name type="synonym">CP95</name>
</gene>
<sequence length="146" mass="16574">MDRELNEHVMIERVEMIARLTAEGTCQERDREIALNLIAEIARGNLMKNNNFSVVFSAPPVGETFAKEGKVKVNITLDKDQKIGQPVIDAFQCELTKRIQSVFPSTRVTVKKGSMTGVELMGFDKDSDREALDSILQEVWEDESWR</sequence>
<proteinExistence type="evidence at protein level"/>
<evidence type="ECO:0000269" key="1">
    <source>
    </source>
</evidence>
<evidence type="ECO:0000305" key="2"/>
<protein>
    <recommendedName>
        <fullName>SOS operon TUM protein</fullName>
    </recommendedName>
    <alternativeName>
        <fullName>ORF95 protein</fullName>
    </alternativeName>
    <alternativeName>
        <fullName>Protein TUM95</fullName>
    </alternativeName>
</protein>
<name>TUM_BP186</name>